<gene>
    <name type="primary">ilvbl</name>
    <name type="synonym">hacl2</name>
    <name type="ORF">zgc:66376</name>
    <name type="ORF">zgc:85697</name>
</gene>
<sequence length="621" mass="67036">MDISMYLGCSLGAALGGVIFASYKLGLLYQLFHKTERQSPRHGGESVAEVLRSHGVKFVFTLVGGHISPILVACEKLGIRIVDTRHEATAVFAADAVARLSGTVGVAAVTAGPGLTNTVTAVKNAQMAESPLLLIGGAAATLLQGRGALQDIDQMSLFKPLCKFCASVRTVREIVPTVRKALAIAQSGTPGPVFIEFPIDTLYPYHVVEKEFAPKNTPKGLMGKIIAWYLKNHLSNLFAGAWESRDLSPLPVHIPHATDDQVQRCVELVSRAKKPVILLGSQATLPPTPADDIRKALESLGIPCFLGGMSRGLLGKNSPLHIRQNRRDALKDADLVLLAGTVCDFRLSYGRVLNRRSKIIAVNRDKSQLLKNSDMFWKPTVAIQGDAGSFLLNLSKALKGHRCPEEWPQSLKEGDNVKEKANRAKADEKTERHLNPLSVLHRVDELLAEDSIIVADGGDFVGSAAYIMRPRGPLCWLDPGAFGTLGVGGGFALGAKLCRPESEVWIVYGDGSLGYTVAEFDTFTRHKTPVIALVGNDACWSQISREQVPMLGSNVACGLAFTDYHVVADGYGGKGYLIGREDESQLEDIIKKAQKECKEGKAVLLNVLIGKTNFREGSISV</sequence>
<organism>
    <name type="scientific">Danio rerio</name>
    <name type="common">Zebrafish</name>
    <name type="synonym">Brachydanio rerio</name>
    <dbReference type="NCBI Taxonomy" id="7955"/>
    <lineage>
        <taxon>Eukaryota</taxon>
        <taxon>Metazoa</taxon>
        <taxon>Chordata</taxon>
        <taxon>Craniata</taxon>
        <taxon>Vertebrata</taxon>
        <taxon>Euteleostomi</taxon>
        <taxon>Actinopterygii</taxon>
        <taxon>Neopterygii</taxon>
        <taxon>Teleostei</taxon>
        <taxon>Ostariophysi</taxon>
        <taxon>Cypriniformes</taxon>
        <taxon>Danionidae</taxon>
        <taxon>Danioninae</taxon>
        <taxon>Danio</taxon>
    </lineage>
</organism>
<reference key="1">
    <citation type="submission" date="2004-04" db="EMBL/GenBank/DDBJ databases">
        <authorList>
            <consortium name="NIH - Zebrafish Gene Collection (ZGC) project"/>
        </authorList>
    </citation>
    <scope>NUCLEOTIDE SEQUENCE [LARGE SCALE MRNA]</scope>
    <source>
        <tissue>Embryo</tissue>
    </source>
</reference>
<dbReference type="EC" id="4.1.2.-" evidence="2"/>
<dbReference type="EMBL" id="BC068362">
    <property type="protein sequence ID" value="AAH68362.1"/>
    <property type="molecule type" value="mRNA"/>
</dbReference>
<dbReference type="RefSeq" id="NP_956960.2">
    <property type="nucleotide sequence ID" value="NM_200666.2"/>
</dbReference>
<dbReference type="SMR" id="Q6NV04"/>
<dbReference type="FunCoup" id="Q6NV04">
    <property type="interactions" value="427"/>
</dbReference>
<dbReference type="STRING" id="7955.ENSDARP00000004404"/>
<dbReference type="PaxDb" id="7955-ENSDARP00000004404"/>
<dbReference type="Ensembl" id="ENSDART00000016271">
    <property type="protein sequence ID" value="ENSDARP00000004404"/>
    <property type="gene ID" value="ENSDARG00000017126"/>
</dbReference>
<dbReference type="Ensembl" id="ENSDART00000177181">
    <property type="protein sequence ID" value="ENSDARP00000143612"/>
    <property type="gene ID" value="ENSDARG00000017126"/>
</dbReference>
<dbReference type="GeneID" id="393639"/>
<dbReference type="KEGG" id="dre:393639"/>
<dbReference type="AGR" id="ZFIN:ZDB-GENE-040426-1623"/>
<dbReference type="CTD" id="10994"/>
<dbReference type="ZFIN" id="ZDB-GENE-040426-1623">
    <property type="gene designation" value="ilvbl"/>
</dbReference>
<dbReference type="eggNOG" id="KOG1185">
    <property type="taxonomic scope" value="Eukaryota"/>
</dbReference>
<dbReference type="HOGENOM" id="CLU_013748_3_3_1"/>
<dbReference type="InParanoid" id="Q6NV04"/>
<dbReference type="OMA" id="QETDMIG"/>
<dbReference type="OrthoDB" id="16262at2759"/>
<dbReference type="PhylomeDB" id="Q6NV04"/>
<dbReference type="TreeFam" id="TF354221"/>
<dbReference type="PRO" id="PR:Q6NV04"/>
<dbReference type="Proteomes" id="UP000000437">
    <property type="component" value="Chromosome 18"/>
</dbReference>
<dbReference type="Bgee" id="ENSDARG00000017126">
    <property type="expression patterns" value="Expressed in intestine and 25 other cell types or tissues"/>
</dbReference>
<dbReference type="ExpressionAtlas" id="Q6NV04">
    <property type="expression patterns" value="baseline and differential"/>
</dbReference>
<dbReference type="GO" id="GO:0005948">
    <property type="term" value="C:acetolactate synthase complex"/>
    <property type="evidence" value="ECO:0000318"/>
    <property type="project" value="GO_Central"/>
</dbReference>
<dbReference type="GO" id="GO:0005789">
    <property type="term" value="C:endoplasmic reticulum membrane"/>
    <property type="evidence" value="ECO:0000250"/>
    <property type="project" value="UniProtKB"/>
</dbReference>
<dbReference type="GO" id="GO:0003984">
    <property type="term" value="F:acetolactate synthase activity"/>
    <property type="evidence" value="ECO:0000318"/>
    <property type="project" value="GO_Central"/>
</dbReference>
<dbReference type="GO" id="GO:0050660">
    <property type="term" value="F:flavin adenine dinucleotide binding"/>
    <property type="evidence" value="ECO:0000318"/>
    <property type="project" value="GO_Central"/>
</dbReference>
<dbReference type="GO" id="GO:0016829">
    <property type="term" value="F:lyase activity"/>
    <property type="evidence" value="ECO:0007669"/>
    <property type="project" value="UniProtKB-KW"/>
</dbReference>
<dbReference type="GO" id="GO:0000287">
    <property type="term" value="F:magnesium ion binding"/>
    <property type="evidence" value="ECO:0007669"/>
    <property type="project" value="InterPro"/>
</dbReference>
<dbReference type="GO" id="GO:0030976">
    <property type="term" value="F:thiamine pyrophosphate binding"/>
    <property type="evidence" value="ECO:0007669"/>
    <property type="project" value="InterPro"/>
</dbReference>
<dbReference type="GO" id="GO:0048701">
    <property type="term" value="P:embryonic cranial skeleton morphogenesis"/>
    <property type="evidence" value="ECO:0000315"/>
    <property type="project" value="ZFIN"/>
</dbReference>
<dbReference type="GO" id="GO:0001561">
    <property type="term" value="P:fatty acid alpha-oxidation"/>
    <property type="evidence" value="ECO:0000250"/>
    <property type="project" value="UniProtKB"/>
</dbReference>
<dbReference type="GO" id="GO:0009097">
    <property type="term" value="P:isoleucine biosynthetic process"/>
    <property type="evidence" value="ECO:0000318"/>
    <property type="project" value="GO_Central"/>
</dbReference>
<dbReference type="GO" id="GO:0009099">
    <property type="term" value="P:L-valine biosynthetic process"/>
    <property type="evidence" value="ECO:0000318"/>
    <property type="project" value="GO_Central"/>
</dbReference>
<dbReference type="CDD" id="cd02004">
    <property type="entry name" value="TPP_BZL_OCoD_HPCL"/>
    <property type="match status" value="1"/>
</dbReference>
<dbReference type="CDD" id="cd07035">
    <property type="entry name" value="TPP_PYR_POX_like"/>
    <property type="match status" value="1"/>
</dbReference>
<dbReference type="FunFam" id="3.40.50.1220:FF:000021">
    <property type="entry name" value="IlvB (bacterial acetolactate synthase)-like"/>
    <property type="match status" value="1"/>
</dbReference>
<dbReference type="FunFam" id="3.40.50.970:FF:000048">
    <property type="entry name" value="IlvB (bacterial acetolactate synthase)-like"/>
    <property type="match status" value="1"/>
</dbReference>
<dbReference type="Gene3D" id="3.40.50.970">
    <property type="match status" value="2"/>
</dbReference>
<dbReference type="Gene3D" id="3.40.50.1220">
    <property type="entry name" value="TPP-binding domain"/>
    <property type="match status" value="1"/>
</dbReference>
<dbReference type="InterPro" id="IPR029035">
    <property type="entry name" value="DHS-like_NAD/FAD-binding_dom"/>
</dbReference>
<dbReference type="InterPro" id="IPR029061">
    <property type="entry name" value="THDP-binding"/>
</dbReference>
<dbReference type="InterPro" id="IPR012000">
    <property type="entry name" value="Thiamin_PyroP_enz_cen_dom"/>
</dbReference>
<dbReference type="InterPro" id="IPR012001">
    <property type="entry name" value="Thiamin_PyroP_enz_TPP-bd_dom"/>
</dbReference>
<dbReference type="InterPro" id="IPR000399">
    <property type="entry name" value="TPP-bd_CS"/>
</dbReference>
<dbReference type="InterPro" id="IPR045229">
    <property type="entry name" value="TPP_enz"/>
</dbReference>
<dbReference type="InterPro" id="IPR011766">
    <property type="entry name" value="TPP_enzyme_TPP-bd"/>
</dbReference>
<dbReference type="PANTHER" id="PTHR18968:SF166">
    <property type="entry name" value="2-HYDROXYACYL-COA LYASE 2"/>
    <property type="match status" value="1"/>
</dbReference>
<dbReference type="PANTHER" id="PTHR18968">
    <property type="entry name" value="THIAMINE PYROPHOSPHATE ENZYMES"/>
    <property type="match status" value="1"/>
</dbReference>
<dbReference type="Pfam" id="PF02775">
    <property type="entry name" value="TPP_enzyme_C"/>
    <property type="match status" value="1"/>
</dbReference>
<dbReference type="Pfam" id="PF00205">
    <property type="entry name" value="TPP_enzyme_M"/>
    <property type="match status" value="1"/>
</dbReference>
<dbReference type="Pfam" id="PF02776">
    <property type="entry name" value="TPP_enzyme_N"/>
    <property type="match status" value="1"/>
</dbReference>
<dbReference type="SUPFAM" id="SSF52467">
    <property type="entry name" value="DHS-like NAD/FAD-binding domain"/>
    <property type="match status" value="1"/>
</dbReference>
<dbReference type="SUPFAM" id="SSF52518">
    <property type="entry name" value="Thiamin diphosphate-binding fold (THDP-binding)"/>
    <property type="match status" value="2"/>
</dbReference>
<dbReference type="PROSITE" id="PS00187">
    <property type="entry name" value="TPP_ENZYMES"/>
    <property type="match status" value="1"/>
</dbReference>
<feature type="chain" id="PRO_0000314827" description="2-hydroxyacyl-CoA lyase 2">
    <location>
        <begin position="1"/>
        <end position="621"/>
    </location>
</feature>
<feature type="transmembrane region" description="Helical" evidence="5">
    <location>
        <begin position="7"/>
        <end position="29"/>
    </location>
</feature>
<feature type="region of interest" description="Thiamine pyrophosphate binding" evidence="3">
    <location>
        <begin position="459"/>
        <end position="539"/>
    </location>
</feature>
<feature type="binding site" evidence="3">
    <location>
        <position position="87"/>
    </location>
    <ligand>
        <name>thiamine diphosphate</name>
        <dbReference type="ChEBI" id="CHEBI:58937"/>
    </ligand>
</feature>
<feature type="binding site" evidence="3">
    <location>
        <position position="510"/>
    </location>
    <ligand>
        <name>Mg(2+)</name>
        <dbReference type="ChEBI" id="CHEBI:18420"/>
    </ligand>
</feature>
<feature type="binding site" evidence="3">
    <location>
        <position position="536"/>
    </location>
    <ligand>
        <name>Mg(2+)</name>
        <dbReference type="ChEBI" id="CHEBI:18420"/>
    </ligand>
</feature>
<protein>
    <recommendedName>
        <fullName>2-hydroxyacyl-CoA lyase 2</fullName>
        <ecNumber evidence="2">4.1.2.-</ecNumber>
    </recommendedName>
    <alternativeName>
        <fullName>Acetolactate synthase-like protein</fullName>
    </alternativeName>
    <alternativeName>
        <fullName>IlvB-like protein</fullName>
    </alternativeName>
</protein>
<accession>Q6NV04</accession>
<evidence type="ECO:0000250" key="1"/>
<evidence type="ECO:0000250" key="2">
    <source>
        <dbReference type="UniProtKB" id="A1L0T0"/>
    </source>
</evidence>
<evidence type="ECO:0000250" key="3">
    <source>
        <dbReference type="UniProtKB" id="P40149"/>
    </source>
</evidence>
<evidence type="ECO:0000250" key="4">
    <source>
        <dbReference type="UniProtKB" id="Q8CHM7"/>
    </source>
</evidence>
<evidence type="ECO:0000255" key="5"/>
<evidence type="ECO:0000305" key="6"/>
<keyword id="KW-0256">Endoplasmic reticulum</keyword>
<keyword id="KW-0276">Fatty acid metabolism</keyword>
<keyword id="KW-0443">Lipid metabolism</keyword>
<keyword id="KW-0456">Lyase</keyword>
<keyword id="KW-0460">Magnesium</keyword>
<keyword id="KW-0472">Membrane</keyword>
<keyword id="KW-0479">Metal-binding</keyword>
<keyword id="KW-1185">Reference proteome</keyword>
<keyword id="KW-0786">Thiamine pyrophosphate</keyword>
<keyword id="KW-0812">Transmembrane</keyword>
<keyword id="KW-1133">Transmembrane helix</keyword>
<comment type="function">
    <text evidence="2">Endoplasmic reticulum 2-OH acyl-CoA lyase involved in the cleavage (C1 removal) reaction in the fatty acid alpha-oxydation in a thiamine pyrophosphate (TPP)-dependent manner.</text>
</comment>
<comment type="catalytic activity">
    <reaction evidence="2">
        <text>2-hydroxyoctadecanoyl-CoA = heptadecanal + formyl-CoA</text>
        <dbReference type="Rhea" id="RHEA:55196"/>
        <dbReference type="ChEBI" id="CHEBI:57376"/>
        <dbReference type="ChEBI" id="CHEBI:74116"/>
        <dbReference type="ChEBI" id="CHEBI:138631"/>
    </reaction>
    <physiologicalReaction direction="left-to-right" evidence="2">
        <dbReference type="Rhea" id="RHEA:55197"/>
    </physiologicalReaction>
</comment>
<comment type="catalytic activity">
    <reaction evidence="2">
        <text>(2R)-hydroxyhexadecanoyl-CoA = pentadecanal + formyl-CoA</text>
        <dbReference type="Rhea" id="RHEA:55212"/>
        <dbReference type="ChEBI" id="CHEBI:17302"/>
        <dbReference type="ChEBI" id="CHEBI:57376"/>
        <dbReference type="ChEBI" id="CHEBI:138654"/>
    </reaction>
    <physiologicalReaction direction="left-to-right" evidence="2">
        <dbReference type="Rhea" id="RHEA:55213"/>
    </physiologicalReaction>
</comment>
<comment type="cofactor">
    <cofactor evidence="4">
        <name>Mg(2+)</name>
        <dbReference type="ChEBI" id="CHEBI:18420"/>
    </cofactor>
    <text evidence="4">Binds 1 Mg(2+) ion per subunit.</text>
</comment>
<comment type="cofactor">
    <cofactor evidence="2">
        <name>thiamine diphosphate</name>
        <dbReference type="ChEBI" id="CHEBI:58937"/>
    </cofactor>
    <text evidence="1">Binds 1 thiamine pyrophosphate per subunit.</text>
</comment>
<comment type="subcellular location">
    <subcellularLocation>
        <location evidence="2">Endoplasmic reticulum membrane</location>
        <topology evidence="5">Single-pass membrane protein</topology>
    </subcellularLocation>
</comment>
<comment type="similarity">
    <text evidence="6">Belongs to the TPP enzyme family.</text>
</comment>
<name>HACL2_DANRE</name>
<proteinExistence type="evidence at transcript level"/>